<comment type="function">
    <text evidence="1">Part of the high-affinity ATP-driven potassium transport (or Kdp) system, which catalyzes the hydrolysis of ATP coupled with the electrogenic transport of potassium into the cytoplasm. This subunit acts as a catalytic chaperone that increases the ATP-binding affinity of the ATP-hydrolyzing subunit KdpB by the formation of a transient KdpB/KdpC/ATP ternary complex.</text>
</comment>
<comment type="subunit">
    <text evidence="1">The system is composed of three essential subunits: KdpA, KdpB and KdpC.</text>
</comment>
<comment type="subcellular location">
    <subcellularLocation>
        <location evidence="1">Cell membrane</location>
        <topology evidence="1">Single-pass membrane protein</topology>
    </subcellularLocation>
</comment>
<comment type="similarity">
    <text evidence="1">Belongs to the KdpC family.</text>
</comment>
<sequence>MAKKQSILSPIIRITFTFLVLCGLVYPLIVTGIAQAVMKDNADGSLIYNDKNEVIGSKLIGQNFTDPRYFHGRVSSIEYKAEASGSNNYAPSNPDLEKRVEKSIEEWKKQNPSVPVTEVPIDLVTNSGSGLDPDISPKAASVQVERISKLTNIPKETLDQLIKDQTEGAALGLFGETRVNVLKLNLGLQKIMK</sequence>
<keyword id="KW-0067">ATP-binding</keyword>
<keyword id="KW-1003">Cell membrane</keyword>
<keyword id="KW-0406">Ion transport</keyword>
<keyword id="KW-0472">Membrane</keyword>
<keyword id="KW-0547">Nucleotide-binding</keyword>
<keyword id="KW-0630">Potassium</keyword>
<keyword id="KW-0633">Potassium transport</keyword>
<keyword id="KW-0812">Transmembrane</keyword>
<keyword id="KW-1133">Transmembrane helix</keyword>
<keyword id="KW-0813">Transport</keyword>
<feature type="chain" id="PRO_1000132510" description="Potassium-transporting ATPase KdpC subunit">
    <location>
        <begin position="1"/>
        <end position="193"/>
    </location>
</feature>
<feature type="transmembrane region" description="Helical" evidence="1">
    <location>
        <begin position="14"/>
        <end position="34"/>
    </location>
</feature>
<name>KDPC_BACAA</name>
<organism>
    <name type="scientific">Bacillus anthracis (strain A0248)</name>
    <dbReference type="NCBI Taxonomy" id="592021"/>
    <lineage>
        <taxon>Bacteria</taxon>
        <taxon>Bacillati</taxon>
        <taxon>Bacillota</taxon>
        <taxon>Bacilli</taxon>
        <taxon>Bacillales</taxon>
        <taxon>Bacillaceae</taxon>
        <taxon>Bacillus</taxon>
        <taxon>Bacillus cereus group</taxon>
    </lineage>
</organism>
<protein>
    <recommendedName>
        <fullName evidence="1">Potassium-transporting ATPase KdpC subunit</fullName>
    </recommendedName>
    <alternativeName>
        <fullName evidence="1">ATP phosphohydrolase [potassium-transporting] C chain</fullName>
    </alternativeName>
    <alternativeName>
        <fullName evidence="1">Potassium-binding and translocating subunit C</fullName>
    </alternativeName>
    <alternativeName>
        <fullName evidence="1">Potassium-translocating ATPase C chain</fullName>
    </alternativeName>
</protein>
<gene>
    <name evidence="1" type="primary">kdpC</name>
    <name type="ordered locus">BAA_0849</name>
</gene>
<dbReference type="EMBL" id="CP001598">
    <property type="protein sequence ID" value="ACQ47594.1"/>
    <property type="molecule type" value="Genomic_DNA"/>
</dbReference>
<dbReference type="RefSeq" id="WP_001085558.1">
    <property type="nucleotide sequence ID" value="NC_012659.1"/>
</dbReference>
<dbReference type="SMR" id="C3P0M1"/>
<dbReference type="GeneID" id="45020820"/>
<dbReference type="KEGG" id="bai:BAA_0849"/>
<dbReference type="HOGENOM" id="CLU_077094_1_0_9"/>
<dbReference type="GO" id="GO:0005886">
    <property type="term" value="C:plasma membrane"/>
    <property type="evidence" value="ECO:0007669"/>
    <property type="project" value="UniProtKB-SubCell"/>
</dbReference>
<dbReference type="GO" id="GO:0005524">
    <property type="term" value="F:ATP binding"/>
    <property type="evidence" value="ECO:0007669"/>
    <property type="project" value="UniProtKB-UniRule"/>
</dbReference>
<dbReference type="GO" id="GO:0008556">
    <property type="term" value="F:P-type potassium transmembrane transporter activity"/>
    <property type="evidence" value="ECO:0007669"/>
    <property type="project" value="InterPro"/>
</dbReference>
<dbReference type="HAMAP" id="MF_00276">
    <property type="entry name" value="KdpC"/>
    <property type="match status" value="1"/>
</dbReference>
<dbReference type="InterPro" id="IPR003820">
    <property type="entry name" value="KdpC"/>
</dbReference>
<dbReference type="NCBIfam" id="TIGR00681">
    <property type="entry name" value="kdpC"/>
    <property type="match status" value="1"/>
</dbReference>
<dbReference type="NCBIfam" id="NF001454">
    <property type="entry name" value="PRK00315.1"/>
    <property type="match status" value="1"/>
</dbReference>
<dbReference type="NCBIfam" id="NF010601">
    <property type="entry name" value="PRK13997.1"/>
    <property type="match status" value="1"/>
</dbReference>
<dbReference type="PANTHER" id="PTHR30042">
    <property type="entry name" value="POTASSIUM-TRANSPORTING ATPASE C CHAIN"/>
    <property type="match status" value="1"/>
</dbReference>
<dbReference type="PANTHER" id="PTHR30042:SF2">
    <property type="entry name" value="POTASSIUM-TRANSPORTING ATPASE KDPC SUBUNIT"/>
    <property type="match status" value="1"/>
</dbReference>
<dbReference type="Pfam" id="PF02669">
    <property type="entry name" value="KdpC"/>
    <property type="match status" value="1"/>
</dbReference>
<dbReference type="PIRSF" id="PIRSF001296">
    <property type="entry name" value="K_ATPase_KdpC"/>
    <property type="match status" value="1"/>
</dbReference>
<evidence type="ECO:0000255" key="1">
    <source>
        <dbReference type="HAMAP-Rule" id="MF_00276"/>
    </source>
</evidence>
<proteinExistence type="inferred from homology"/>
<reference key="1">
    <citation type="submission" date="2009-04" db="EMBL/GenBank/DDBJ databases">
        <title>Genome sequence of Bacillus anthracis A0248.</title>
        <authorList>
            <person name="Dodson R.J."/>
            <person name="Munk A.C."/>
            <person name="Bruce D."/>
            <person name="Detter C."/>
            <person name="Tapia R."/>
            <person name="Sutton G."/>
            <person name="Sims D."/>
            <person name="Brettin T."/>
        </authorList>
    </citation>
    <scope>NUCLEOTIDE SEQUENCE [LARGE SCALE GENOMIC DNA]</scope>
    <source>
        <strain>A0248</strain>
    </source>
</reference>
<accession>C3P0M1</accession>